<accession>Q8ZMA9</accession>
<evidence type="ECO:0000255" key="1">
    <source>
        <dbReference type="HAMAP-Rule" id="MF_00008"/>
    </source>
</evidence>
<protein>
    <recommendedName>
        <fullName evidence="1">Thymidylate synthase</fullName>
        <shortName evidence="1">TS</shortName>
        <shortName evidence="1">TSase</shortName>
        <ecNumber evidence="1">2.1.1.45</ecNumber>
    </recommendedName>
</protein>
<name>TYSY_SALTY</name>
<comment type="function">
    <text evidence="1">Catalyzes the reductive methylation of 2'-deoxyuridine-5'-monophosphate (dUMP) to 2'-deoxythymidine-5'-monophosphate (dTMP) while utilizing 5,10-methylenetetrahydrofolate (mTHF) as the methyl donor and reductant in the reaction, yielding dihydrofolate (DHF) as a by-product. This enzymatic reaction provides an intracellular de novo source of dTMP, an essential precursor for DNA biosynthesis.</text>
</comment>
<comment type="catalytic activity">
    <reaction evidence="1">
        <text>dUMP + (6R)-5,10-methylene-5,6,7,8-tetrahydrofolate = 7,8-dihydrofolate + dTMP</text>
        <dbReference type="Rhea" id="RHEA:12104"/>
        <dbReference type="ChEBI" id="CHEBI:15636"/>
        <dbReference type="ChEBI" id="CHEBI:57451"/>
        <dbReference type="ChEBI" id="CHEBI:63528"/>
        <dbReference type="ChEBI" id="CHEBI:246422"/>
        <dbReference type="EC" id="2.1.1.45"/>
    </reaction>
</comment>
<comment type="pathway">
    <text evidence="1">Pyrimidine metabolism; dTTP biosynthesis.</text>
</comment>
<comment type="subunit">
    <text evidence="1">Homodimer.</text>
</comment>
<comment type="subcellular location">
    <subcellularLocation>
        <location evidence="1">Cytoplasm</location>
    </subcellularLocation>
</comment>
<comment type="similarity">
    <text evidence="1">Belongs to the thymidylate synthase family. Bacterial-type ThyA subfamily.</text>
</comment>
<dbReference type="EC" id="2.1.1.45" evidence="1"/>
<dbReference type="EMBL" id="AE006468">
    <property type="protein sequence ID" value="AAL21877.1"/>
    <property type="molecule type" value="Genomic_DNA"/>
</dbReference>
<dbReference type="RefSeq" id="NP_461918.1">
    <property type="nucleotide sequence ID" value="NC_003197.2"/>
</dbReference>
<dbReference type="RefSeq" id="WP_000816247.1">
    <property type="nucleotide sequence ID" value="NC_003197.2"/>
</dbReference>
<dbReference type="SMR" id="Q8ZMA9"/>
<dbReference type="STRING" id="99287.STM3001"/>
<dbReference type="PaxDb" id="99287-STM3001"/>
<dbReference type="GeneID" id="1254524"/>
<dbReference type="KEGG" id="stm:STM3001"/>
<dbReference type="PATRIC" id="fig|99287.12.peg.3176"/>
<dbReference type="HOGENOM" id="CLU_021669_0_0_6"/>
<dbReference type="OMA" id="AYGRFWR"/>
<dbReference type="PhylomeDB" id="Q8ZMA9"/>
<dbReference type="BioCyc" id="SENT99287:STM3001-MONOMER"/>
<dbReference type="UniPathway" id="UPA00575"/>
<dbReference type="Proteomes" id="UP000001014">
    <property type="component" value="Chromosome"/>
</dbReference>
<dbReference type="GO" id="GO:0005829">
    <property type="term" value="C:cytosol"/>
    <property type="evidence" value="ECO:0000318"/>
    <property type="project" value="GO_Central"/>
</dbReference>
<dbReference type="GO" id="GO:0004799">
    <property type="term" value="F:thymidylate synthase activity"/>
    <property type="evidence" value="ECO:0000318"/>
    <property type="project" value="GO_Central"/>
</dbReference>
<dbReference type="GO" id="GO:0006231">
    <property type="term" value="P:dTMP biosynthetic process"/>
    <property type="evidence" value="ECO:0000318"/>
    <property type="project" value="GO_Central"/>
</dbReference>
<dbReference type="GO" id="GO:0006235">
    <property type="term" value="P:dTTP biosynthetic process"/>
    <property type="evidence" value="ECO:0007669"/>
    <property type="project" value="UniProtKB-UniRule"/>
</dbReference>
<dbReference type="GO" id="GO:0032259">
    <property type="term" value="P:methylation"/>
    <property type="evidence" value="ECO:0007669"/>
    <property type="project" value="UniProtKB-KW"/>
</dbReference>
<dbReference type="CDD" id="cd00351">
    <property type="entry name" value="TS_Pyrimidine_HMase"/>
    <property type="match status" value="1"/>
</dbReference>
<dbReference type="FunFam" id="3.30.572.10:FF:000001">
    <property type="entry name" value="Thymidylate synthase"/>
    <property type="match status" value="1"/>
</dbReference>
<dbReference type="Gene3D" id="3.30.572.10">
    <property type="entry name" value="Thymidylate synthase/dCMP hydroxymethylase domain"/>
    <property type="match status" value="1"/>
</dbReference>
<dbReference type="HAMAP" id="MF_00008">
    <property type="entry name" value="Thymidy_synth_bact"/>
    <property type="match status" value="1"/>
</dbReference>
<dbReference type="InterPro" id="IPR045097">
    <property type="entry name" value="Thymidate_synth/dCMP_Mease"/>
</dbReference>
<dbReference type="InterPro" id="IPR023451">
    <property type="entry name" value="Thymidate_synth/dCMP_Mease_dom"/>
</dbReference>
<dbReference type="InterPro" id="IPR036926">
    <property type="entry name" value="Thymidate_synth/dCMP_Mease_sf"/>
</dbReference>
<dbReference type="InterPro" id="IPR000398">
    <property type="entry name" value="Thymidylate_synthase"/>
</dbReference>
<dbReference type="InterPro" id="IPR020940">
    <property type="entry name" value="Thymidylate_synthase_AS"/>
</dbReference>
<dbReference type="NCBIfam" id="NF002497">
    <property type="entry name" value="PRK01827.1-3"/>
    <property type="match status" value="1"/>
</dbReference>
<dbReference type="NCBIfam" id="NF002499">
    <property type="entry name" value="PRK01827.1-5"/>
    <property type="match status" value="1"/>
</dbReference>
<dbReference type="NCBIfam" id="TIGR03284">
    <property type="entry name" value="thym_sym"/>
    <property type="match status" value="2"/>
</dbReference>
<dbReference type="PANTHER" id="PTHR11548:SF9">
    <property type="entry name" value="THYMIDYLATE SYNTHASE"/>
    <property type="match status" value="1"/>
</dbReference>
<dbReference type="PANTHER" id="PTHR11548">
    <property type="entry name" value="THYMIDYLATE SYNTHASE 1"/>
    <property type="match status" value="1"/>
</dbReference>
<dbReference type="Pfam" id="PF00303">
    <property type="entry name" value="Thymidylat_synt"/>
    <property type="match status" value="1"/>
</dbReference>
<dbReference type="PRINTS" id="PR00108">
    <property type="entry name" value="THYMDSNTHASE"/>
</dbReference>
<dbReference type="SUPFAM" id="SSF55831">
    <property type="entry name" value="Thymidylate synthase/dCMP hydroxymethylase"/>
    <property type="match status" value="1"/>
</dbReference>
<dbReference type="PROSITE" id="PS00091">
    <property type="entry name" value="THYMIDYLATE_SYNTHASE"/>
    <property type="match status" value="1"/>
</dbReference>
<keyword id="KW-0963">Cytoplasm</keyword>
<keyword id="KW-0489">Methyltransferase</keyword>
<keyword id="KW-0545">Nucleotide biosynthesis</keyword>
<keyword id="KW-1185">Reference proteome</keyword>
<keyword id="KW-0808">Transferase</keyword>
<sequence>MKQYLELMQKVLDEGTQKNDRTGTGTLSIFGHQMRFNLQEGFPLVTTKRCHLRSIIHELLWFLQGDTNIAYLHENNVTIWDEWADENGDLGPVYGKQWRAWPTPDGRHIDQIATVLSQLKNDPDSRRIIVSAWNVGELDKMALAPCHAFFQFYVADGKLSCQLYQRSCDVFLGLPFNIASYALLVHMMAQQCDLDVGDFVWTGGDTHLYSNHMEQTHLQLSREPRALPKLVIKRKPDSLFDYRFDDFEIEGYDPHPGIKAPVAI</sequence>
<reference key="1">
    <citation type="journal article" date="2001" name="Nature">
        <title>Complete genome sequence of Salmonella enterica serovar Typhimurium LT2.</title>
        <authorList>
            <person name="McClelland M."/>
            <person name="Sanderson K.E."/>
            <person name="Spieth J."/>
            <person name="Clifton S.W."/>
            <person name="Latreille P."/>
            <person name="Courtney L."/>
            <person name="Porwollik S."/>
            <person name="Ali J."/>
            <person name="Dante M."/>
            <person name="Du F."/>
            <person name="Hou S."/>
            <person name="Layman D."/>
            <person name="Leonard S."/>
            <person name="Nguyen C."/>
            <person name="Scott K."/>
            <person name="Holmes A."/>
            <person name="Grewal N."/>
            <person name="Mulvaney E."/>
            <person name="Ryan E."/>
            <person name="Sun H."/>
            <person name="Florea L."/>
            <person name="Miller W."/>
            <person name="Stoneking T."/>
            <person name="Nhan M."/>
            <person name="Waterston R."/>
            <person name="Wilson R.K."/>
        </authorList>
    </citation>
    <scope>NUCLEOTIDE SEQUENCE [LARGE SCALE GENOMIC DNA]</scope>
    <source>
        <strain>LT2 / SGSC1412 / ATCC 700720</strain>
    </source>
</reference>
<proteinExistence type="inferred from homology"/>
<gene>
    <name evidence="1" type="primary">thyA</name>
    <name type="ordered locus">STM3001</name>
</gene>
<organism>
    <name type="scientific">Salmonella typhimurium (strain LT2 / SGSC1412 / ATCC 700720)</name>
    <dbReference type="NCBI Taxonomy" id="99287"/>
    <lineage>
        <taxon>Bacteria</taxon>
        <taxon>Pseudomonadati</taxon>
        <taxon>Pseudomonadota</taxon>
        <taxon>Gammaproteobacteria</taxon>
        <taxon>Enterobacterales</taxon>
        <taxon>Enterobacteriaceae</taxon>
        <taxon>Salmonella</taxon>
    </lineage>
</organism>
<feature type="chain" id="PRO_0000141014" description="Thymidylate synthase">
    <location>
        <begin position="1"/>
        <end position="264"/>
    </location>
</feature>
<feature type="active site" description="Nucleophile" evidence="1">
    <location>
        <position position="146"/>
    </location>
</feature>
<feature type="binding site" description="in other chain" evidence="1">
    <location>
        <position position="21"/>
    </location>
    <ligand>
        <name>dUMP</name>
        <dbReference type="ChEBI" id="CHEBI:246422"/>
        <note>ligand shared between dimeric partners</note>
    </ligand>
</feature>
<feature type="binding site" evidence="1">
    <location>
        <position position="51"/>
    </location>
    <ligand>
        <name>(6R)-5,10-methylene-5,6,7,8-tetrahydrofolate</name>
        <dbReference type="ChEBI" id="CHEBI:15636"/>
    </ligand>
</feature>
<feature type="binding site" evidence="1">
    <location>
        <begin position="126"/>
        <end position="127"/>
    </location>
    <ligand>
        <name>dUMP</name>
        <dbReference type="ChEBI" id="CHEBI:246422"/>
        <note>ligand shared between dimeric partners</note>
    </ligand>
</feature>
<feature type="binding site" description="in other chain" evidence="1">
    <location>
        <begin position="166"/>
        <end position="169"/>
    </location>
    <ligand>
        <name>dUMP</name>
        <dbReference type="ChEBI" id="CHEBI:246422"/>
        <note>ligand shared between dimeric partners</note>
    </ligand>
</feature>
<feature type="binding site" evidence="1">
    <location>
        <position position="169"/>
    </location>
    <ligand>
        <name>(6R)-5,10-methylene-5,6,7,8-tetrahydrofolate</name>
        <dbReference type="ChEBI" id="CHEBI:15636"/>
    </ligand>
</feature>
<feature type="binding site" description="in other chain" evidence="1">
    <location>
        <position position="177"/>
    </location>
    <ligand>
        <name>dUMP</name>
        <dbReference type="ChEBI" id="CHEBI:246422"/>
        <note>ligand shared between dimeric partners</note>
    </ligand>
</feature>
<feature type="binding site" description="in other chain" evidence="1">
    <location>
        <begin position="207"/>
        <end position="209"/>
    </location>
    <ligand>
        <name>dUMP</name>
        <dbReference type="ChEBI" id="CHEBI:246422"/>
        <note>ligand shared between dimeric partners</note>
    </ligand>
</feature>
<feature type="binding site" evidence="1">
    <location>
        <position position="263"/>
    </location>
    <ligand>
        <name>(6R)-5,10-methylene-5,6,7,8-tetrahydrofolate</name>
        <dbReference type="ChEBI" id="CHEBI:15636"/>
    </ligand>
</feature>